<dbReference type="EMBL" id="AM233362">
    <property type="protein sequence ID" value="CAJ79389.1"/>
    <property type="molecule type" value="Genomic_DNA"/>
</dbReference>
<dbReference type="RefSeq" id="WP_003015742.1">
    <property type="nucleotide sequence ID" value="NZ_CP009694.1"/>
</dbReference>
<dbReference type="SMR" id="Q2A3P1"/>
<dbReference type="KEGG" id="ftl:FTL_0950"/>
<dbReference type="Proteomes" id="UP000001944">
    <property type="component" value="Chromosome"/>
</dbReference>
<dbReference type="GO" id="GO:0022625">
    <property type="term" value="C:cytosolic large ribosomal subunit"/>
    <property type="evidence" value="ECO:0007669"/>
    <property type="project" value="TreeGrafter"/>
</dbReference>
<dbReference type="GO" id="GO:0008097">
    <property type="term" value="F:5S rRNA binding"/>
    <property type="evidence" value="ECO:0007669"/>
    <property type="project" value="InterPro"/>
</dbReference>
<dbReference type="GO" id="GO:0003735">
    <property type="term" value="F:structural constituent of ribosome"/>
    <property type="evidence" value="ECO:0007669"/>
    <property type="project" value="InterPro"/>
</dbReference>
<dbReference type="GO" id="GO:0006412">
    <property type="term" value="P:translation"/>
    <property type="evidence" value="ECO:0007669"/>
    <property type="project" value="UniProtKB-UniRule"/>
</dbReference>
<dbReference type="CDD" id="cd00495">
    <property type="entry name" value="Ribosomal_L25_TL5_CTC"/>
    <property type="match status" value="1"/>
</dbReference>
<dbReference type="FunFam" id="2.40.240.10:FF:000002">
    <property type="entry name" value="50S ribosomal protein L25"/>
    <property type="match status" value="1"/>
</dbReference>
<dbReference type="Gene3D" id="2.40.240.10">
    <property type="entry name" value="Ribosomal Protein L25, Chain P"/>
    <property type="match status" value="1"/>
</dbReference>
<dbReference type="HAMAP" id="MF_01336">
    <property type="entry name" value="Ribosomal_bL25"/>
    <property type="match status" value="1"/>
</dbReference>
<dbReference type="InterPro" id="IPR020056">
    <property type="entry name" value="Rbsml_bL25/Gln-tRNA_synth_N"/>
</dbReference>
<dbReference type="InterPro" id="IPR011035">
    <property type="entry name" value="Ribosomal_bL25/Gln-tRNA_synth"/>
</dbReference>
<dbReference type="InterPro" id="IPR001021">
    <property type="entry name" value="Ribosomal_bL25_long"/>
</dbReference>
<dbReference type="InterPro" id="IPR020055">
    <property type="entry name" value="Ribosomal_bL25_short"/>
</dbReference>
<dbReference type="InterPro" id="IPR029751">
    <property type="entry name" value="Ribosomal_L25_dom"/>
</dbReference>
<dbReference type="InterPro" id="IPR020930">
    <property type="entry name" value="Ribosomal_uL5_bac-type"/>
</dbReference>
<dbReference type="NCBIfam" id="TIGR00731">
    <property type="entry name" value="bL25_bact_ctc"/>
    <property type="match status" value="1"/>
</dbReference>
<dbReference type="NCBIfam" id="NF004612">
    <property type="entry name" value="PRK05943.1"/>
    <property type="match status" value="1"/>
</dbReference>
<dbReference type="PANTHER" id="PTHR33284">
    <property type="entry name" value="RIBOSOMAL PROTEIN L25/GLN-TRNA SYNTHETASE, ANTI-CODON-BINDING DOMAIN-CONTAINING PROTEIN"/>
    <property type="match status" value="1"/>
</dbReference>
<dbReference type="PANTHER" id="PTHR33284:SF1">
    <property type="entry name" value="RIBOSOMAL PROTEIN L25_GLN-TRNA SYNTHETASE, ANTI-CODON-BINDING DOMAIN-CONTAINING PROTEIN"/>
    <property type="match status" value="1"/>
</dbReference>
<dbReference type="Pfam" id="PF01386">
    <property type="entry name" value="Ribosomal_L25p"/>
    <property type="match status" value="1"/>
</dbReference>
<dbReference type="SUPFAM" id="SSF50715">
    <property type="entry name" value="Ribosomal protein L25-like"/>
    <property type="match status" value="1"/>
</dbReference>
<name>RL25_FRATH</name>
<keyword id="KW-1185">Reference proteome</keyword>
<keyword id="KW-0687">Ribonucleoprotein</keyword>
<keyword id="KW-0689">Ribosomal protein</keyword>
<keyword id="KW-0694">RNA-binding</keyword>
<keyword id="KW-0699">rRNA-binding</keyword>
<accession>Q2A3P1</accession>
<proteinExistence type="inferred from homology"/>
<evidence type="ECO:0000255" key="1">
    <source>
        <dbReference type="HAMAP-Rule" id="MF_01336"/>
    </source>
</evidence>
<evidence type="ECO:0000305" key="2"/>
<comment type="function">
    <text evidence="1">This is one of the proteins that binds to the 5S RNA in the ribosome where it forms part of the central protuberance.</text>
</comment>
<comment type="subunit">
    <text evidence="1">Part of the 50S ribosomal subunit; part of the 5S rRNA/L5/L18/L25 subcomplex. Contacts the 5S rRNA. Binds to the 5S rRNA independently of L5 and L18.</text>
</comment>
<comment type="similarity">
    <text evidence="1">Belongs to the bacterial ribosomal protein bL25 family.</text>
</comment>
<reference key="1">
    <citation type="submission" date="2006-03" db="EMBL/GenBank/DDBJ databases">
        <title>Complete genome sequence of Francisella tularensis LVS (Live Vaccine Strain).</title>
        <authorList>
            <person name="Chain P."/>
            <person name="Larimer F."/>
            <person name="Land M."/>
            <person name="Stilwagen S."/>
            <person name="Larsson P."/>
            <person name="Bearden S."/>
            <person name="Chu M."/>
            <person name="Oyston P."/>
            <person name="Forsman M."/>
            <person name="Andersson S."/>
            <person name="Lindler L."/>
            <person name="Titball R."/>
            <person name="Garcia E."/>
        </authorList>
    </citation>
    <scope>NUCLEOTIDE SEQUENCE [LARGE SCALE GENOMIC DNA]</scope>
    <source>
        <strain>LVS</strain>
    </source>
</reference>
<organism>
    <name type="scientific">Francisella tularensis subsp. holarctica (strain LVS)</name>
    <dbReference type="NCBI Taxonomy" id="376619"/>
    <lineage>
        <taxon>Bacteria</taxon>
        <taxon>Pseudomonadati</taxon>
        <taxon>Pseudomonadota</taxon>
        <taxon>Gammaproteobacteria</taxon>
        <taxon>Thiotrichales</taxon>
        <taxon>Francisellaceae</taxon>
        <taxon>Francisella</taxon>
    </lineage>
</organism>
<feature type="chain" id="PRO_0000243104" description="Large ribosomal subunit protein bL25">
    <location>
        <begin position="1"/>
        <end position="96"/>
    </location>
</feature>
<gene>
    <name evidence="1" type="primary">rplY</name>
    <name type="ordered locus">FTL_0950</name>
</gene>
<sequence length="96" mass="10904">MANFVLKAEKREDLGTGASRRLRRAGKIPAVIYGGEKEAVSVLLDHDKVLHSTEDKEFFSSEITLDIDGKQEKVIIKALQRHPYKVKLIHADFMRV</sequence>
<protein>
    <recommendedName>
        <fullName evidence="1">Large ribosomal subunit protein bL25</fullName>
    </recommendedName>
    <alternativeName>
        <fullName evidence="2">50S ribosomal protein L25</fullName>
    </alternativeName>
</protein>